<organism>
    <name type="scientific">Shewanella oneidensis (strain ATCC 700550 / JCM 31522 / CIP 106686 / LMG 19005 / NCIMB 14063 / MR-1)</name>
    <dbReference type="NCBI Taxonomy" id="211586"/>
    <lineage>
        <taxon>Bacteria</taxon>
        <taxon>Pseudomonadati</taxon>
        <taxon>Pseudomonadota</taxon>
        <taxon>Gammaproteobacteria</taxon>
        <taxon>Alteromonadales</taxon>
        <taxon>Shewanellaceae</taxon>
        <taxon>Shewanella</taxon>
    </lineage>
</organism>
<reference key="1">
    <citation type="journal article" date="2002" name="Nat. Biotechnol.">
        <title>Genome sequence of the dissimilatory metal ion-reducing bacterium Shewanella oneidensis.</title>
        <authorList>
            <person name="Heidelberg J.F."/>
            <person name="Paulsen I.T."/>
            <person name="Nelson K.E."/>
            <person name="Gaidos E.J."/>
            <person name="Nelson W.C."/>
            <person name="Read T.D."/>
            <person name="Eisen J.A."/>
            <person name="Seshadri R."/>
            <person name="Ward N.L."/>
            <person name="Methe B.A."/>
            <person name="Clayton R.A."/>
            <person name="Meyer T."/>
            <person name="Tsapin A."/>
            <person name="Scott J."/>
            <person name="Beanan M.J."/>
            <person name="Brinkac L.M."/>
            <person name="Daugherty S.C."/>
            <person name="DeBoy R.T."/>
            <person name="Dodson R.J."/>
            <person name="Durkin A.S."/>
            <person name="Haft D.H."/>
            <person name="Kolonay J.F."/>
            <person name="Madupu R."/>
            <person name="Peterson J.D."/>
            <person name="Umayam L.A."/>
            <person name="White O."/>
            <person name="Wolf A.M."/>
            <person name="Vamathevan J.J."/>
            <person name="Weidman J.F."/>
            <person name="Impraim M."/>
            <person name="Lee K."/>
            <person name="Berry K.J."/>
            <person name="Lee C."/>
            <person name="Mueller J."/>
            <person name="Khouri H.M."/>
            <person name="Gill J."/>
            <person name="Utterback T.R."/>
            <person name="McDonald L.A."/>
            <person name="Feldblyum T.V."/>
            <person name="Smith H.O."/>
            <person name="Venter J.C."/>
            <person name="Nealson K.H."/>
            <person name="Fraser C.M."/>
        </authorList>
    </citation>
    <scope>NUCLEOTIDE SEQUENCE [LARGE SCALE GENOMIC DNA]</scope>
    <source>
        <strain>ATCC 700550 / JCM 31522 / CIP 106686 / LMG 19005 / NCIMB 14063 / MR-1</strain>
    </source>
</reference>
<reference key="2">
    <citation type="journal article" date="2010" name="Appl. Environ. Microbiol.">
        <title>Structure, function, and insights into the biosynthesis of a head-to-head hydrocarbon in Shewanella oneidensis strain MR-1.</title>
        <authorList>
            <person name="Sukovich D.J."/>
            <person name="Seffernick J.L."/>
            <person name="Richman J.E."/>
            <person name="Hunt K.A."/>
            <person name="Gralnick J.A."/>
            <person name="Wackett L.P."/>
        </authorList>
    </citation>
    <scope>FUNCTION IN OLEFIN BIOSYNTHESIS</scope>
    <scope>DISRUPTION PHENOTYPE</scope>
    <source>
        <strain>ATCC 700550 / JCM 31522 / CIP 106686 / LMG 19005 / NCIMB 14063 / MR-1</strain>
    </source>
</reference>
<gene>
    <name evidence="4" type="primary">oleB</name>
    <name evidence="6" type="ordered locus">SO_1743</name>
</gene>
<evidence type="ECO:0000250" key="1">
    <source>
        <dbReference type="UniProtKB" id="Q8PDW8"/>
    </source>
</evidence>
<evidence type="ECO:0000255" key="2"/>
<evidence type="ECO:0000269" key="3">
    <source>
    </source>
</evidence>
<evidence type="ECO:0000303" key="4">
    <source>
    </source>
</evidence>
<evidence type="ECO:0000305" key="5"/>
<evidence type="ECO:0000312" key="6">
    <source>
        <dbReference type="EMBL" id="AAN54797.1"/>
    </source>
</evidence>
<dbReference type="EC" id="4.1.1.114" evidence="1"/>
<dbReference type="EMBL" id="AE014299">
    <property type="protein sequence ID" value="AAN54797.1"/>
    <property type="molecule type" value="Genomic_DNA"/>
</dbReference>
<dbReference type="RefSeq" id="NP_717353.1">
    <property type="nucleotide sequence ID" value="NC_004347.2"/>
</dbReference>
<dbReference type="RefSeq" id="WP_011071875.1">
    <property type="nucleotide sequence ID" value="NC_004347.2"/>
</dbReference>
<dbReference type="SMR" id="Q8EG65"/>
<dbReference type="STRING" id="211586.SO_1743"/>
<dbReference type="ESTHER" id="sheon-SO1743">
    <property type="family name" value="Haloalkane_dehalogenase-HLD1"/>
</dbReference>
<dbReference type="PaxDb" id="211586-SO_1743"/>
<dbReference type="KEGG" id="son:SO_1743"/>
<dbReference type="PATRIC" id="fig|211586.12.peg.1677"/>
<dbReference type="eggNOG" id="COG0596">
    <property type="taxonomic scope" value="Bacteria"/>
</dbReference>
<dbReference type="HOGENOM" id="CLU_020336_13_3_6"/>
<dbReference type="OrthoDB" id="9780765at2"/>
<dbReference type="PhylomeDB" id="Q8EG65"/>
<dbReference type="BioCyc" id="MetaCyc:MONOMER-20169"/>
<dbReference type="BioCyc" id="SONE211586:G1GMP-1598-MONOMER"/>
<dbReference type="Proteomes" id="UP000008186">
    <property type="component" value="Chromosome"/>
</dbReference>
<dbReference type="GO" id="GO:0016020">
    <property type="term" value="C:membrane"/>
    <property type="evidence" value="ECO:0000318"/>
    <property type="project" value="GO_Central"/>
</dbReference>
<dbReference type="GO" id="GO:0016829">
    <property type="term" value="F:lyase activity"/>
    <property type="evidence" value="ECO:0007669"/>
    <property type="project" value="UniProtKB-KW"/>
</dbReference>
<dbReference type="Gene3D" id="3.40.50.1820">
    <property type="entry name" value="alpha/beta hydrolase"/>
    <property type="match status" value="1"/>
</dbReference>
<dbReference type="InterPro" id="IPR000073">
    <property type="entry name" value="AB_hydrolase_1"/>
</dbReference>
<dbReference type="InterPro" id="IPR029058">
    <property type="entry name" value="AB_hydrolase_fold"/>
</dbReference>
<dbReference type="InterPro" id="IPR050266">
    <property type="entry name" value="AB_hydrolase_sf"/>
</dbReference>
<dbReference type="InterPro" id="IPR000639">
    <property type="entry name" value="Epox_hydrolase-like"/>
</dbReference>
<dbReference type="PANTHER" id="PTHR43798:SF24">
    <property type="entry name" value="CIS-3-ALKYL-4-ALKYLOXETAN-2-ONE DECARBOXYLASE"/>
    <property type="match status" value="1"/>
</dbReference>
<dbReference type="PANTHER" id="PTHR43798">
    <property type="entry name" value="MONOACYLGLYCEROL LIPASE"/>
    <property type="match status" value="1"/>
</dbReference>
<dbReference type="Pfam" id="PF00561">
    <property type="entry name" value="Abhydrolase_1"/>
    <property type="match status" value="1"/>
</dbReference>
<dbReference type="PRINTS" id="PR00111">
    <property type="entry name" value="ABHYDROLASE"/>
</dbReference>
<dbReference type="PRINTS" id="PR00412">
    <property type="entry name" value="EPOXHYDRLASE"/>
</dbReference>
<dbReference type="SUPFAM" id="SSF53474">
    <property type="entry name" value="alpha/beta-Hydrolases"/>
    <property type="match status" value="1"/>
</dbReference>
<feature type="chain" id="PRO_0000446913" description="Cis-3-alkyl-4-alkyloxetan-2-one decarboxylase">
    <location>
        <begin position="1"/>
        <end position="318"/>
    </location>
</feature>
<feature type="domain" description="AB hydrolase-1" evidence="2">
    <location>
        <begin position="30"/>
        <end position="275"/>
    </location>
</feature>
<name>OLEB_SHEON</name>
<keyword id="KW-0456">Lyase</keyword>
<keyword id="KW-1185">Reference proteome</keyword>
<accession>Q8EG65</accession>
<sequence>MLDTLLPFKRHFLSRNGNKLHYINEGQGEPVVMVHGNPSWSFYYRNLVSALKDTHQCIVPDHIGCGLSDKPDDSGYDYTLKNRIDDLEALLDSLNVKENITLVVHDWGGMIGMGYAARYPERIKRLVILNTGAFHLPDTKPLPLALWICRNTLLGTVLVRGFNAFSSIASYVGVKRQPMSKYIREAYVAPFNSWANRISTLRFVQDIPLKPGDRNYQLVSDIAASLPKFAKVPTLICWGLQDFVFDKHFLVKWREHMPHAQVHEFADCGHYILEDASDEVITHIKHFMTETETLATQVNPADSITEFESASQAPQAER</sequence>
<protein>
    <recommendedName>
        <fullName evidence="5">Cis-3-alkyl-4-alkyloxetan-2-one decarboxylase</fullName>
        <ecNumber evidence="1">4.1.1.114</ecNumber>
    </recommendedName>
</protein>
<comment type="function">
    <text evidence="1 3">Involved in olefin biosynthesis (PubMed:20418444). Catalyzes the elimination of carbon dioxide from beta-lactones to form the final olefin product (By similarity). The S.oneidensis oleABCD genes produce 3,6,9,12,15,19,22,25,28-hentriacontanonaene, which may aid the cells in adapting to a sudden drop in temperature (PubMed:20418444).</text>
</comment>
<comment type="catalytic activity">
    <reaction evidence="1">
        <text>a cis-3-alkyl-4-alkyloxetan-2-one = a cis-alkene + CO2</text>
        <dbReference type="Rhea" id="RHEA:18345"/>
        <dbReference type="ChEBI" id="CHEBI:16526"/>
        <dbReference type="ChEBI" id="CHEBI:138483"/>
        <dbReference type="ChEBI" id="CHEBI:139021"/>
        <dbReference type="EC" id="4.1.1.114"/>
    </reaction>
    <physiologicalReaction direction="left-to-right" evidence="1">
        <dbReference type="Rhea" id="RHEA:18346"/>
    </physiologicalReaction>
</comment>
<comment type="disruption phenotype">
    <text evidence="3">Deletion of the entire oleABCD gene cluster leads to the complete absence of nonpolar extractable products. The oleABCD deletion strain shows a significantly longer lag phase than the wild-type strain when shifted to a lower temperature.</text>
</comment>
<comment type="similarity">
    <text evidence="5">Belongs to the AB hydrolase superfamily.</text>
</comment>
<proteinExistence type="evidence at protein level"/>